<name>TTR33_CAEEL</name>
<protein>
    <recommendedName>
        <fullName evidence="7">Transthyretin-like protein 33</fullName>
    </recommendedName>
</protein>
<dbReference type="EMBL" id="BX284605">
    <property type="protein sequence ID" value="CCD66955.1"/>
    <property type="molecule type" value="Genomic_DNA"/>
</dbReference>
<dbReference type="RefSeq" id="NP_872192.1">
    <property type="nucleotide sequence ID" value="NM_182392.8"/>
</dbReference>
<dbReference type="SMR" id="Q8I7H9"/>
<dbReference type="FunCoup" id="Q8I7H9">
    <property type="interactions" value="65"/>
</dbReference>
<dbReference type="STRING" id="6239.C37C3.13.2"/>
<dbReference type="PaxDb" id="6239-C37C3.13.2"/>
<dbReference type="PeptideAtlas" id="Q8I7H9"/>
<dbReference type="EnsemblMetazoa" id="C37C3.13.1">
    <property type="protein sequence ID" value="C37C3.13.1"/>
    <property type="gene ID" value="WBGene00016505"/>
</dbReference>
<dbReference type="GeneID" id="259631"/>
<dbReference type="KEGG" id="cel:CELE_C37C3.13"/>
<dbReference type="UCSC" id="C37C3.13.1">
    <property type="organism name" value="c. elegans"/>
</dbReference>
<dbReference type="AGR" id="WB:WBGene00016505"/>
<dbReference type="CTD" id="259631"/>
<dbReference type="WormBase" id="C37C3.13">
    <property type="protein sequence ID" value="CE32820"/>
    <property type="gene ID" value="WBGene00016505"/>
    <property type="gene designation" value="ttr-33"/>
</dbReference>
<dbReference type="eggNOG" id="ENOG502S1IK">
    <property type="taxonomic scope" value="Eukaryota"/>
</dbReference>
<dbReference type="HOGENOM" id="CLU_121109_4_1_1"/>
<dbReference type="InParanoid" id="Q8I7H9"/>
<dbReference type="OMA" id="MQIEFES"/>
<dbReference type="OrthoDB" id="5847482at2759"/>
<dbReference type="PhylomeDB" id="Q8I7H9"/>
<dbReference type="PRO" id="PR:Q8I7H9"/>
<dbReference type="Proteomes" id="UP000001940">
    <property type="component" value="Chromosome V"/>
</dbReference>
<dbReference type="Bgee" id="WBGene00016505">
    <property type="expression patterns" value="Expressed in larva and 3 other cell types or tissues"/>
</dbReference>
<dbReference type="GO" id="GO:0009986">
    <property type="term" value="C:cell surface"/>
    <property type="evidence" value="ECO:0007669"/>
    <property type="project" value="InterPro"/>
</dbReference>
<dbReference type="GO" id="GO:0005576">
    <property type="term" value="C:extracellular region"/>
    <property type="evidence" value="ECO:0007669"/>
    <property type="project" value="UniProtKB-SubCell"/>
</dbReference>
<dbReference type="Gene3D" id="2.60.40.3330">
    <property type="match status" value="1"/>
</dbReference>
<dbReference type="InterPro" id="IPR001534">
    <property type="entry name" value="Transthyretin-like"/>
</dbReference>
<dbReference type="InterPro" id="IPR038479">
    <property type="entry name" value="Transthyretin-like_sf"/>
</dbReference>
<dbReference type="PANTHER" id="PTHR21700">
    <property type="entry name" value="TRANSTHYRETIN-LIKE FAMILY PROTEIN-RELATED"/>
    <property type="match status" value="1"/>
</dbReference>
<dbReference type="PANTHER" id="PTHR21700:SF117">
    <property type="entry name" value="TRANSTHYRETIN-LIKE PROTEIN 33"/>
    <property type="match status" value="1"/>
</dbReference>
<dbReference type="Pfam" id="PF01060">
    <property type="entry name" value="TTR-52"/>
    <property type="match status" value="1"/>
</dbReference>
<keyword id="KW-1185">Reference proteome</keyword>
<keyword id="KW-0964">Secreted</keyword>
<keyword id="KW-0732">Signal</keyword>
<sequence>MSRLACISSLFILCAIGSEAVFTQSAGVKGVLMCGDKPLANTKVKLYDDDTGPDLDDLLAEGTTDSLGQFLLTGHTSEVMTIDPKLNIYHDCDDGLKPCQRRVTFNIPKSFVSSGENPKTFFNIGTINMQIEFESESRDCLHR</sequence>
<feature type="signal peptide" evidence="1">
    <location>
        <begin position="1"/>
        <end position="20"/>
    </location>
</feature>
<feature type="chain" id="PRO_5004308455" description="Transthyretin-like protein 33" evidence="1">
    <location>
        <begin position="21"/>
        <end position="143"/>
    </location>
</feature>
<feature type="mutagenesis site" description="In gt1983; increased sensitivity to the neurotoxin 6-hydroxydopamine (6-OHDA) during the first three larval stages resulting in the degeneration of dopaminergic head neurons. Reduced survival and developmental defects in response to oxidative stress-induced by paraquat. No defects in the rate of axonal regrowth, reconnection or fusion after injury. No degeneration of dopaminergic head neurons in a dat-1 (ok157) mutant background in response to 6-OHDA. Dopaminergic neurodegeneration is partially suppressed in a ced-6 (n1813) or ced-10 (n3246) mutant background in response to 6-OHDA." evidence="2">
    <original>G</original>
    <variation>E</variation>
    <location>
        <position position="27"/>
    </location>
</feature>
<feature type="mutagenesis site" description="In gk567379; increased sensitivity to the neurotoxin 6-hydroxydopamine (6-OHDA) during the first three larval stages resulting in the degeneration of dopaminergic head neurons." evidence="2">
    <original>L</original>
    <variation>F</variation>
    <location>
        <position position="72"/>
    </location>
</feature>
<proteinExistence type="evidence at protein level"/>
<evidence type="ECO:0000255" key="1"/>
<evidence type="ECO:0000269" key="2">
    <source>
    </source>
</evidence>
<evidence type="ECO:0000303" key="3">
    <source>
    </source>
</evidence>
<evidence type="ECO:0000305" key="4"/>
<evidence type="ECO:0000305" key="5">
    <source>
    </source>
</evidence>
<evidence type="ECO:0000312" key="6">
    <source>
        <dbReference type="Proteomes" id="UP000001940"/>
    </source>
</evidence>
<evidence type="ECO:0000312" key="7">
    <source>
        <dbReference type="WormBase" id="C37C3.13"/>
    </source>
</evidence>
<organism evidence="6">
    <name type="scientific">Caenorhabditis elegans</name>
    <dbReference type="NCBI Taxonomy" id="6239"/>
    <lineage>
        <taxon>Eukaryota</taxon>
        <taxon>Metazoa</taxon>
        <taxon>Ecdysozoa</taxon>
        <taxon>Nematoda</taxon>
        <taxon>Chromadorea</taxon>
        <taxon>Rhabditida</taxon>
        <taxon>Rhabditina</taxon>
        <taxon>Rhabditomorpha</taxon>
        <taxon>Rhabditoidea</taxon>
        <taxon>Rhabditidae</taxon>
        <taxon>Peloderinae</taxon>
        <taxon>Caenorhabditis</taxon>
    </lineage>
</organism>
<reference evidence="6" key="1">
    <citation type="journal article" date="1998" name="Science">
        <title>Genome sequence of the nematode C. elegans: a platform for investigating biology.</title>
        <authorList>
            <consortium name="The C. elegans sequencing consortium"/>
        </authorList>
    </citation>
    <scope>NUCLEOTIDE SEQUENCE [LARGE SCALE GENOMIC DNA]</scope>
    <source>
        <strain evidence="6">Bristol N2</strain>
    </source>
</reference>
<reference evidence="4" key="2">
    <citation type="journal article" date="2018" name="PLoS Genet.">
        <title>6-OHDA-induced dopaminergic neurodegeneration in Caenorhabditis elegans is promoted by the engulfment pathway and inhibited by the transthyretin-related protein TTR-33.</title>
        <authorList>
            <person name="Offenburger S.L."/>
            <person name="Ho X.Y."/>
            <person name="Tachie-Menson T."/>
            <person name="Coakley S."/>
            <person name="Hilliard M.A."/>
            <person name="Gartner A."/>
        </authorList>
    </citation>
    <scope>FUNCTION</scope>
    <scope>SUBCELLULAR LOCATION</scope>
    <scope>TISSUE SPECIFICITY</scope>
    <scope>DEVELOPMENTAL STAGE</scope>
    <scope>MUTAGENESIS OF GLY-27 AND LEU-72</scope>
</reference>
<accession>Q8I7H9</accession>
<comment type="function">
    <text evidence="2">Protects dopaminergic neurons from degeneration caused by oxidative stress.</text>
</comment>
<comment type="subcellular location">
    <subcellularLocation>
        <location evidence="5">Secreted</location>
    </subcellularLocation>
</comment>
<comment type="tissue specificity">
    <text evidence="2">Expressed in head cells next to and anterior of the first pharyngeal bulb, the pharynx, and the hypodermis.</text>
</comment>
<comment type="developmental stage">
    <text evidence="2">Expressed throughout development (PubMed:29346382). First expressed in the embryonic pretzel stage (PubMed:29346382). In L1 stage larvae, expressed next to the pharyngeal bulb, between the mouth and first pharyngeal bulb, in the pharynx and in cells posterior to the second pharyngeal bulb (PubMed:29346382).</text>
</comment>
<comment type="similarity">
    <text evidence="4">Belongs to the nematode transthyretin-like family.</text>
</comment>
<gene>
    <name evidence="3 7" type="primary">ttr-33</name>
    <name evidence="7" type="ORF">C37C3.13</name>
</gene>